<gene>
    <name type="ordered locus">NGR_a03130</name>
    <name type="ORF">y4jC</name>
</gene>
<reference key="1">
    <citation type="journal article" date="1997" name="Nature">
        <title>Molecular basis of symbiosis between Rhizobium and legumes.</title>
        <authorList>
            <person name="Freiberg C.A."/>
            <person name="Fellay R."/>
            <person name="Bairoch A."/>
            <person name="Broughton W.J."/>
            <person name="Rosenthal A."/>
            <person name="Perret X."/>
        </authorList>
    </citation>
    <scope>NUCLEOTIDE SEQUENCE [LARGE SCALE GENOMIC DNA]</scope>
    <source>
        <strain>NBRC 101917 / NGR234</strain>
    </source>
</reference>
<reference key="2">
    <citation type="journal article" date="2009" name="Appl. Environ. Microbiol.">
        <title>Rhizobium sp. strain NGR234 possesses a remarkable number of secretion systems.</title>
        <authorList>
            <person name="Schmeisser C."/>
            <person name="Liesegang H."/>
            <person name="Krysciak D."/>
            <person name="Bakkou N."/>
            <person name="Le Quere A."/>
            <person name="Wollherr A."/>
            <person name="Heinemeyer I."/>
            <person name="Morgenstern B."/>
            <person name="Pommerening-Roeser A."/>
            <person name="Flores M."/>
            <person name="Palacios R."/>
            <person name="Brenner S."/>
            <person name="Gottschalk G."/>
            <person name="Schmitz R.A."/>
            <person name="Broughton W.J."/>
            <person name="Perret X."/>
            <person name="Strittmatter A.W."/>
            <person name="Streit W.R."/>
        </authorList>
    </citation>
    <scope>NUCLEOTIDE SEQUENCE [LARGE SCALE GENOMIC DNA]</scope>
    <source>
        <strain>NBRC 101917 / NGR234</strain>
    </source>
</reference>
<evidence type="ECO:0000305" key="1"/>
<name>Y4JC_SINFN</name>
<comment type="similarity">
    <text evidence="1">Belongs to the transposase 34 family.</text>
</comment>
<protein>
    <recommendedName>
        <fullName>Uncharacterized protein y4jC</fullName>
    </recommendedName>
</protein>
<accession>P55503</accession>
<feature type="chain" id="PRO_0000200869" description="Uncharacterized protein y4jC">
    <location>
        <begin position="1"/>
        <end position="117"/>
    </location>
</feature>
<dbReference type="EMBL" id="U00090">
    <property type="protein sequence ID" value="AAB91715.1"/>
    <property type="molecule type" value="Genomic_DNA"/>
</dbReference>
<dbReference type="RefSeq" id="NP_443913.1">
    <property type="nucleotide sequence ID" value="NC_000914.2"/>
</dbReference>
<dbReference type="RefSeq" id="WP_010875333.1">
    <property type="nucleotide sequence ID" value="NC_000914.2"/>
</dbReference>
<dbReference type="KEGG" id="rhi:NGR_a03130"/>
<dbReference type="PATRIC" id="fig|394.7.peg.321"/>
<dbReference type="eggNOG" id="COG3436">
    <property type="taxonomic scope" value="Bacteria"/>
</dbReference>
<dbReference type="HOGENOM" id="CLU_128110_1_0_5"/>
<dbReference type="OrthoDB" id="9801450at2"/>
<dbReference type="Proteomes" id="UP000001054">
    <property type="component" value="Plasmid pNGR234a"/>
</dbReference>
<dbReference type="InterPro" id="IPR008878">
    <property type="entry name" value="Transposase_IS66_Orf2"/>
</dbReference>
<dbReference type="NCBIfam" id="NF033819">
    <property type="entry name" value="IS66_TnpB"/>
    <property type="match status" value="1"/>
</dbReference>
<dbReference type="PANTHER" id="PTHR36455">
    <property type="match status" value="1"/>
</dbReference>
<dbReference type="PANTHER" id="PTHR36455:SF1">
    <property type="entry name" value="BLR8292 PROTEIN"/>
    <property type="match status" value="1"/>
</dbReference>
<dbReference type="Pfam" id="PF05717">
    <property type="entry name" value="TnpB_IS66"/>
    <property type="match status" value="1"/>
</dbReference>
<organism>
    <name type="scientific">Sinorhizobium fredii (strain NBRC 101917 / NGR234)</name>
    <dbReference type="NCBI Taxonomy" id="394"/>
    <lineage>
        <taxon>Bacteria</taxon>
        <taxon>Pseudomonadati</taxon>
        <taxon>Pseudomonadota</taxon>
        <taxon>Alphaproteobacteria</taxon>
        <taxon>Hyphomicrobiales</taxon>
        <taxon>Rhizobiaceae</taxon>
        <taxon>Sinorhizobium/Ensifer group</taxon>
        <taxon>Sinorhizobium</taxon>
    </lineage>
</organism>
<keyword id="KW-0614">Plasmid</keyword>
<keyword id="KW-1185">Reference proteome</keyword>
<sequence length="117" mass="13083">MIGPSRGLRIMVATQPVDFRRGMNGLVALVGSALLADPYCGDIFVFRAKRCDRLRCIYWDGSGMILSTKWLESGKFIFPPVKDGALHMSPEEFSLLVAGLDWTRVKRKPVKRPTKVA</sequence>
<geneLocation type="plasmid">
    <name>sym pNGR234a</name>
</geneLocation>
<proteinExistence type="inferred from homology"/>